<accession>Q5LZ08</accession>
<dbReference type="EMBL" id="CP000024">
    <property type="protein sequence ID" value="AAV62915.1"/>
    <property type="molecule type" value="Genomic_DNA"/>
</dbReference>
<dbReference type="RefSeq" id="WP_011227385.1">
    <property type="nucleotide sequence ID" value="NC_006449.1"/>
</dbReference>
<dbReference type="SMR" id="Q5LZ08"/>
<dbReference type="KEGG" id="stc:str1377"/>
<dbReference type="HOGENOM" id="CLU_046981_0_0_9"/>
<dbReference type="Gene3D" id="1.20.1570.10">
    <property type="entry name" value="dip2346 domain like"/>
    <property type="match status" value="1"/>
</dbReference>
<dbReference type="Gene3D" id="3.10.630.10">
    <property type="entry name" value="dip2346 domain like"/>
    <property type="match status" value="1"/>
</dbReference>
<dbReference type="Gene3D" id="3.40.140.40">
    <property type="entry name" value="Domain of unknown function (DUF1846), C-terminal subdomain"/>
    <property type="match status" value="1"/>
</dbReference>
<dbReference type="HAMAP" id="MF_01567">
    <property type="entry name" value="UPF0371"/>
    <property type="match status" value="1"/>
</dbReference>
<dbReference type="InterPro" id="IPR014999">
    <property type="entry name" value="DUF1846"/>
</dbReference>
<dbReference type="InterPro" id="IPR048441">
    <property type="entry name" value="DUF1846_C"/>
</dbReference>
<dbReference type="InterPro" id="IPR048496">
    <property type="entry name" value="DUF1846_N"/>
</dbReference>
<dbReference type="NCBIfam" id="NF010184">
    <property type="entry name" value="PRK13663.1"/>
    <property type="match status" value="1"/>
</dbReference>
<dbReference type="Pfam" id="PF08903">
    <property type="entry name" value="DUF1846"/>
    <property type="match status" value="1"/>
</dbReference>
<dbReference type="Pfam" id="PF20921">
    <property type="entry name" value="DUF1846_C"/>
    <property type="match status" value="1"/>
</dbReference>
<dbReference type="PIRSF" id="PIRSF033132">
    <property type="entry name" value="DUF1846"/>
    <property type="match status" value="1"/>
</dbReference>
<name>Y1377_STRT1</name>
<reference key="1">
    <citation type="journal article" date="2004" name="Nat. Biotechnol.">
        <title>Complete sequence and comparative genome analysis of the dairy bacterium Streptococcus thermophilus.</title>
        <authorList>
            <person name="Bolotin A."/>
            <person name="Quinquis B."/>
            <person name="Renault P."/>
            <person name="Sorokin A."/>
            <person name="Ehrlich S.D."/>
            <person name="Kulakauskas S."/>
            <person name="Lapidus A."/>
            <person name="Goltsman E."/>
            <person name="Mazur M."/>
            <person name="Pusch G.D."/>
            <person name="Fonstein M."/>
            <person name="Overbeek R."/>
            <person name="Kyprides N."/>
            <person name="Purnelle B."/>
            <person name="Prozzi D."/>
            <person name="Ngui K."/>
            <person name="Masuy D."/>
            <person name="Hancy F."/>
            <person name="Burteau S."/>
            <person name="Boutry M."/>
            <person name="Delcour J."/>
            <person name="Goffeau A."/>
            <person name="Hols P."/>
        </authorList>
    </citation>
    <scope>NUCLEOTIDE SEQUENCE [LARGE SCALE GENOMIC DNA]</scope>
    <source>
        <strain>CNRZ 1066</strain>
    </source>
</reference>
<evidence type="ECO:0000255" key="1">
    <source>
        <dbReference type="HAMAP-Rule" id="MF_01567"/>
    </source>
</evidence>
<sequence length="494" mass="55143">MKKQAFSSEQYLNLQRDHILERINQFDGKLYLEFGGKMLEDFHAARVLPGYEPDNKIKLLQEFKDQVEVVIAINASNIEHSKARGDLGISYDQEVLRLIDKFNELNIYVGSVVITQYSGQPAADAFRNQLEKNGITSYIHYPIKGYPTDINHIISPEGMGKNDYIKTSRNLIVVTAPGPGSGKLATCLSNMYHDQINGIKSGYAKFETFPVWNLPLHHPVNLAYEAATADLDDVNMIDPFHLETYGKTTVNYNRDIEIFPVLKRMLERILGESPYASPTDMGVNMVGFAITDDEAAKEASKQEIIRRYYQTVLDFKNERVPETAVKKIELLMNDLGITPEDRQVVVAARAKAEETGGSALALELPNGQIVTGKNSELFGPTAAALINAIKTSAGIDKDTKLIEPEVVKPIQSLKIDHLGSRNPRLHSNEILIALAITAANNADAARAMKELSNLKGSEAHSTIILTDEDKNVLRKLGINVTFDPYYQYDKLYRK</sequence>
<gene>
    <name type="ordered locus">str1377</name>
</gene>
<comment type="similarity">
    <text evidence="1">Belongs to the UPF0371 family.</text>
</comment>
<protein>
    <recommendedName>
        <fullName evidence="1">UPF0371 protein str1377</fullName>
    </recommendedName>
</protein>
<feature type="chain" id="PRO_0000245627" description="UPF0371 protein str1377">
    <location>
        <begin position="1"/>
        <end position="494"/>
    </location>
</feature>
<organism>
    <name type="scientific">Streptococcus thermophilus (strain CNRZ 1066)</name>
    <dbReference type="NCBI Taxonomy" id="299768"/>
    <lineage>
        <taxon>Bacteria</taxon>
        <taxon>Bacillati</taxon>
        <taxon>Bacillota</taxon>
        <taxon>Bacilli</taxon>
        <taxon>Lactobacillales</taxon>
        <taxon>Streptococcaceae</taxon>
        <taxon>Streptococcus</taxon>
    </lineage>
</organism>
<proteinExistence type="inferred from homology"/>